<comment type="function">
    <text evidence="1">Catalyzes the transfer of endogenously produced octanoic acid from octanoyl-acyl-carrier-protein onto the lipoyl domains of lipoate-dependent enzymes. Lipoyl-ACP can also act as a substrate although octanoyl-ACP is likely to be the physiological substrate.</text>
</comment>
<comment type="catalytic activity">
    <reaction evidence="1">
        <text>octanoyl-[ACP] + L-lysyl-[protein] = N(6)-octanoyl-L-lysyl-[protein] + holo-[ACP] + H(+)</text>
        <dbReference type="Rhea" id="RHEA:17665"/>
        <dbReference type="Rhea" id="RHEA-COMP:9636"/>
        <dbReference type="Rhea" id="RHEA-COMP:9685"/>
        <dbReference type="Rhea" id="RHEA-COMP:9752"/>
        <dbReference type="Rhea" id="RHEA-COMP:9928"/>
        <dbReference type="ChEBI" id="CHEBI:15378"/>
        <dbReference type="ChEBI" id="CHEBI:29969"/>
        <dbReference type="ChEBI" id="CHEBI:64479"/>
        <dbReference type="ChEBI" id="CHEBI:78463"/>
        <dbReference type="ChEBI" id="CHEBI:78809"/>
        <dbReference type="EC" id="2.3.1.181"/>
    </reaction>
</comment>
<comment type="pathway">
    <text evidence="1">Protein modification; protein lipoylation via endogenous pathway; protein N(6)-(lipoyl)lysine from octanoyl-[acyl-carrier-protein]: step 1/2.</text>
</comment>
<comment type="subcellular location">
    <subcellularLocation>
        <location evidence="1">Cytoplasm</location>
    </subcellularLocation>
</comment>
<comment type="miscellaneous">
    <text evidence="1">In the reaction, the free carboxyl group of octanoic acid is attached via an amide linkage to the epsilon-amino group of a specific lysine residue of lipoyl domains of lipoate-dependent enzymes.</text>
</comment>
<comment type="similarity">
    <text evidence="1">Belongs to the LipB family.</text>
</comment>
<sequence length="206" mass="23340">MNNIYQKDLGLQQYTKVFEDMLEFTSTRTPETNDEIWLVEHPAVFTQGKHGKPEHILNSHNIPIVATDRGGQVTYHGPGQAVIYFLLDIKRNKLGAKKLVTTVEQACINMLDKYYNLKAHIIDGAHGIYINNQKIASLGLRIKQGKSYHGIAINTNMDLTPFSYINPCGYSGLKMCQLANFYQEADIKKVQQQYTAEFVTLLNNSI</sequence>
<dbReference type="EC" id="2.3.1.181" evidence="1"/>
<dbReference type="EMBL" id="CP000803">
    <property type="protein sequence ID" value="ABU61593.1"/>
    <property type="molecule type" value="Genomic_DNA"/>
</dbReference>
<dbReference type="RefSeq" id="WP_003015973.1">
    <property type="nucleotide sequence ID" value="NC_009749.1"/>
</dbReference>
<dbReference type="SMR" id="A7NC90"/>
<dbReference type="KEGG" id="fta:FTA_1117"/>
<dbReference type="HOGENOM" id="CLU_035168_3_1_6"/>
<dbReference type="UniPathway" id="UPA00538">
    <property type="reaction ID" value="UER00592"/>
</dbReference>
<dbReference type="GO" id="GO:0005737">
    <property type="term" value="C:cytoplasm"/>
    <property type="evidence" value="ECO:0007669"/>
    <property type="project" value="UniProtKB-SubCell"/>
</dbReference>
<dbReference type="GO" id="GO:0033819">
    <property type="term" value="F:lipoyl(octanoyl) transferase activity"/>
    <property type="evidence" value="ECO:0007669"/>
    <property type="project" value="UniProtKB-EC"/>
</dbReference>
<dbReference type="GO" id="GO:0036211">
    <property type="term" value="P:protein modification process"/>
    <property type="evidence" value="ECO:0007669"/>
    <property type="project" value="InterPro"/>
</dbReference>
<dbReference type="CDD" id="cd16444">
    <property type="entry name" value="LipB"/>
    <property type="match status" value="1"/>
</dbReference>
<dbReference type="FunFam" id="3.30.930.10:FF:000020">
    <property type="entry name" value="Octanoyltransferase"/>
    <property type="match status" value="1"/>
</dbReference>
<dbReference type="Gene3D" id="3.30.930.10">
    <property type="entry name" value="Bira Bifunctional Protein, Domain 2"/>
    <property type="match status" value="1"/>
</dbReference>
<dbReference type="HAMAP" id="MF_00013">
    <property type="entry name" value="LipB"/>
    <property type="match status" value="1"/>
</dbReference>
<dbReference type="InterPro" id="IPR045864">
    <property type="entry name" value="aa-tRNA-synth_II/BPL/LPL"/>
</dbReference>
<dbReference type="InterPro" id="IPR004143">
    <property type="entry name" value="BPL_LPL_catalytic"/>
</dbReference>
<dbReference type="InterPro" id="IPR000544">
    <property type="entry name" value="Octanoyltransferase"/>
</dbReference>
<dbReference type="InterPro" id="IPR020605">
    <property type="entry name" value="Octanoyltransferase_CS"/>
</dbReference>
<dbReference type="NCBIfam" id="TIGR00214">
    <property type="entry name" value="lipB"/>
    <property type="match status" value="1"/>
</dbReference>
<dbReference type="NCBIfam" id="NF010922">
    <property type="entry name" value="PRK14342.1"/>
    <property type="match status" value="1"/>
</dbReference>
<dbReference type="PANTHER" id="PTHR10993:SF7">
    <property type="entry name" value="LIPOYLTRANSFERASE 2, MITOCHONDRIAL-RELATED"/>
    <property type="match status" value="1"/>
</dbReference>
<dbReference type="PANTHER" id="PTHR10993">
    <property type="entry name" value="OCTANOYLTRANSFERASE"/>
    <property type="match status" value="1"/>
</dbReference>
<dbReference type="Pfam" id="PF21948">
    <property type="entry name" value="LplA-B_cat"/>
    <property type="match status" value="1"/>
</dbReference>
<dbReference type="PIRSF" id="PIRSF016262">
    <property type="entry name" value="LPLase"/>
    <property type="match status" value="1"/>
</dbReference>
<dbReference type="SUPFAM" id="SSF55681">
    <property type="entry name" value="Class II aaRS and biotin synthetases"/>
    <property type="match status" value="1"/>
</dbReference>
<dbReference type="PROSITE" id="PS51733">
    <property type="entry name" value="BPL_LPL_CATALYTIC"/>
    <property type="match status" value="1"/>
</dbReference>
<dbReference type="PROSITE" id="PS01313">
    <property type="entry name" value="LIPB"/>
    <property type="match status" value="1"/>
</dbReference>
<proteinExistence type="inferred from homology"/>
<keyword id="KW-0012">Acyltransferase</keyword>
<keyword id="KW-0963">Cytoplasm</keyword>
<keyword id="KW-0808">Transferase</keyword>
<name>LIPB_FRATF</name>
<organism>
    <name type="scientific">Francisella tularensis subsp. holarctica (strain FTNF002-00 / FTA)</name>
    <dbReference type="NCBI Taxonomy" id="458234"/>
    <lineage>
        <taxon>Bacteria</taxon>
        <taxon>Pseudomonadati</taxon>
        <taxon>Pseudomonadota</taxon>
        <taxon>Gammaproteobacteria</taxon>
        <taxon>Thiotrichales</taxon>
        <taxon>Francisellaceae</taxon>
        <taxon>Francisella</taxon>
    </lineage>
</organism>
<reference key="1">
    <citation type="journal article" date="2009" name="PLoS ONE">
        <title>Complete genome sequence of Francisella tularensis subspecies holarctica FTNF002-00.</title>
        <authorList>
            <person name="Barabote R.D."/>
            <person name="Xie G."/>
            <person name="Brettin T.S."/>
            <person name="Hinrichs S.H."/>
            <person name="Fey P.D."/>
            <person name="Jay J.J."/>
            <person name="Engle J.L."/>
            <person name="Godbole S.D."/>
            <person name="Noronha J.M."/>
            <person name="Scheuermann R.H."/>
            <person name="Zhou L.W."/>
            <person name="Lion C."/>
            <person name="Dempsey M.P."/>
        </authorList>
    </citation>
    <scope>NUCLEOTIDE SEQUENCE [LARGE SCALE GENOMIC DNA]</scope>
    <source>
        <strain>FTNF002-00 / FTA</strain>
    </source>
</reference>
<protein>
    <recommendedName>
        <fullName evidence="1">Octanoyltransferase</fullName>
        <ecNumber evidence="1">2.3.1.181</ecNumber>
    </recommendedName>
    <alternativeName>
        <fullName evidence="1">Lipoate-protein ligase B</fullName>
    </alternativeName>
    <alternativeName>
        <fullName evidence="1">Lipoyl/octanoyl transferase</fullName>
    </alternativeName>
    <alternativeName>
        <fullName evidence="1">Octanoyl-[acyl-carrier-protein]-protein N-octanoyltransferase</fullName>
    </alternativeName>
</protein>
<gene>
    <name evidence="1" type="primary">lipB</name>
    <name type="ordered locus">FTA_1117</name>
</gene>
<evidence type="ECO:0000255" key="1">
    <source>
        <dbReference type="HAMAP-Rule" id="MF_00013"/>
    </source>
</evidence>
<evidence type="ECO:0000255" key="2">
    <source>
        <dbReference type="PROSITE-ProRule" id="PRU01067"/>
    </source>
</evidence>
<feature type="chain" id="PRO_1000001100" description="Octanoyltransferase">
    <location>
        <begin position="1"/>
        <end position="206"/>
    </location>
</feature>
<feature type="domain" description="BPL/LPL catalytic" evidence="2">
    <location>
        <begin position="30"/>
        <end position="206"/>
    </location>
</feature>
<feature type="active site" description="Acyl-thioester intermediate" evidence="1">
    <location>
        <position position="168"/>
    </location>
</feature>
<feature type="binding site" evidence="1">
    <location>
        <begin position="69"/>
        <end position="76"/>
    </location>
    <ligand>
        <name>substrate</name>
    </ligand>
</feature>
<feature type="binding site" evidence="1">
    <location>
        <begin position="137"/>
        <end position="139"/>
    </location>
    <ligand>
        <name>substrate</name>
    </ligand>
</feature>
<feature type="binding site" evidence="1">
    <location>
        <begin position="150"/>
        <end position="152"/>
    </location>
    <ligand>
        <name>substrate</name>
    </ligand>
</feature>
<feature type="site" description="Lowers pKa of active site Cys" evidence="1">
    <location>
        <position position="134"/>
    </location>
</feature>
<accession>A7NC90</accession>